<organism>
    <name type="scientific">Homo sapiens</name>
    <name type="common">Human</name>
    <dbReference type="NCBI Taxonomy" id="9606"/>
    <lineage>
        <taxon>Eukaryota</taxon>
        <taxon>Metazoa</taxon>
        <taxon>Chordata</taxon>
        <taxon>Craniata</taxon>
        <taxon>Vertebrata</taxon>
        <taxon>Euteleostomi</taxon>
        <taxon>Mammalia</taxon>
        <taxon>Eutheria</taxon>
        <taxon>Euarchontoglires</taxon>
        <taxon>Primates</taxon>
        <taxon>Haplorrhini</taxon>
        <taxon>Catarrhini</taxon>
        <taxon>Hominidae</taxon>
        <taxon>Homo</taxon>
    </lineage>
</organism>
<name>EFCB3_HUMAN</name>
<proteinExistence type="evidence at protein level"/>
<protein>
    <recommendedName>
        <fullName>EF-hand calcium-binding domain-containing protein 3</fullName>
    </recommendedName>
</protein>
<feature type="chain" id="PRO_0000253547" description="EF-hand calcium-binding domain-containing protein 3">
    <location>
        <begin position="1"/>
        <end position="438"/>
    </location>
</feature>
<feature type="domain" description="EF-hand 1" evidence="2">
    <location>
        <begin position="47"/>
        <end position="82"/>
    </location>
</feature>
<feature type="domain" description="EF-hand 2" evidence="2">
    <location>
        <begin position="83"/>
        <end position="118"/>
    </location>
</feature>
<feature type="region of interest" description="Disordered" evidence="3">
    <location>
        <begin position="405"/>
        <end position="438"/>
    </location>
</feature>
<feature type="compositionally biased region" description="Low complexity" evidence="3">
    <location>
        <begin position="405"/>
        <end position="415"/>
    </location>
</feature>
<feature type="compositionally biased region" description="Basic residues" evidence="3">
    <location>
        <begin position="426"/>
        <end position="438"/>
    </location>
</feature>
<feature type="binding site" evidence="2">
    <location>
        <position position="96"/>
    </location>
    <ligand>
        <name>Ca(2+)</name>
        <dbReference type="ChEBI" id="CHEBI:29108"/>
    </ligand>
</feature>
<feature type="binding site" evidence="2">
    <location>
        <position position="98"/>
    </location>
    <ligand>
        <name>Ca(2+)</name>
        <dbReference type="ChEBI" id="CHEBI:29108"/>
    </ligand>
</feature>
<feature type="binding site" evidence="2">
    <location>
        <position position="100"/>
    </location>
    <ligand>
        <name>Ca(2+)</name>
        <dbReference type="ChEBI" id="CHEBI:29108"/>
    </ligand>
</feature>
<feature type="binding site" evidence="2">
    <location>
        <position position="102"/>
    </location>
    <ligand>
        <name>Ca(2+)</name>
        <dbReference type="ChEBI" id="CHEBI:29108"/>
    </ligand>
</feature>
<feature type="binding site" evidence="2">
    <location>
        <position position="107"/>
    </location>
    <ligand>
        <name>Ca(2+)</name>
        <dbReference type="ChEBI" id="CHEBI:29108"/>
    </ligand>
</feature>
<feature type="modified residue" description="Phosphotyrosine" evidence="1">
    <location>
        <position position="279"/>
    </location>
</feature>
<feature type="splice variant" id="VSP_047183" description="In isoform 2." evidence="4">
    <original>M</original>
    <variation>MKELMPHLTFNGNGKINVNSIMEGLKKFKPKGMVTLHKLKTANDIKDRVTGHM</variation>
    <location>
        <position position="1"/>
    </location>
</feature>
<feature type="sequence variant" id="VAR_028377" description="In dbSNP:rs12602985.">
    <original>G</original>
    <variation>R</variation>
    <location>
        <position position="341"/>
    </location>
</feature>
<feature type="sequence variant" id="VAR_028378" description="In dbSNP:rs1056642.">
    <original>M</original>
    <variation>I</variation>
    <location>
        <position position="364"/>
    </location>
</feature>
<feature type="sequence variant" id="VAR_028379" description="In dbSNP:rs1056643.">
    <original>S</original>
    <variation>A</variation>
    <location>
        <position position="370"/>
    </location>
</feature>
<accession>Q8N7B9</accession>
<accession>J3KQM8</accession>
<evidence type="ECO:0000250" key="1">
    <source>
        <dbReference type="UniProtKB" id="Q66HC0"/>
    </source>
</evidence>
<evidence type="ECO:0000255" key="2">
    <source>
        <dbReference type="PROSITE-ProRule" id="PRU00448"/>
    </source>
</evidence>
<evidence type="ECO:0000256" key="3">
    <source>
        <dbReference type="SAM" id="MobiDB-lite"/>
    </source>
</evidence>
<evidence type="ECO:0000305" key="4"/>
<reference key="1">
    <citation type="journal article" date="2004" name="Nat. Genet.">
        <title>Complete sequencing and characterization of 21,243 full-length human cDNAs.</title>
        <authorList>
            <person name="Ota T."/>
            <person name="Suzuki Y."/>
            <person name="Nishikawa T."/>
            <person name="Otsuki T."/>
            <person name="Sugiyama T."/>
            <person name="Irie R."/>
            <person name="Wakamatsu A."/>
            <person name="Hayashi K."/>
            <person name="Sato H."/>
            <person name="Nagai K."/>
            <person name="Kimura K."/>
            <person name="Makita H."/>
            <person name="Sekine M."/>
            <person name="Obayashi M."/>
            <person name="Nishi T."/>
            <person name="Shibahara T."/>
            <person name="Tanaka T."/>
            <person name="Ishii S."/>
            <person name="Yamamoto J."/>
            <person name="Saito K."/>
            <person name="Kawai Y."/>
            <person name="Isono Y."/>
            <person name="Nakamura Y."/>
            <person name="Nagahari K."/>
            <person name="Murakami K."/>
            <person name="Yasuda T."/>
            <person name="Iwayanagi T."/>
            <person name="Wagatsuma M."/>
            <person name="Shiratori A."/>
            <person name="Sudo H."/>
            <person name="Hosoiri T."/>
            <person name="Kaku Y."/>
            <person name="Kodaira H."/>
            <person name="Kondo H."/>
            <person name="Sugawara M."/>
            <person name="Takahashi M."/>
            <person name="Kanda K."/>
            <person name="Yokoi T."/>
            <person name="Furuya T."/>
            <person name="Kikkawa E."/>
            <person name="Omura Y."/>
            <person name="Abe K."/>
            <person name="Kamihara K."/>
            <person name="Katsuta N."/>
            <person name="Sato K."/>
            <person name="Tanikawa M."/>
            <person name="Yamazaki M."/>
            <person name="Ninomiya K."/>
            <person name="Ishibashi T."/>
            <person name="Yamashita H."/>
            <person name="Murakawa K."/>
            <person name="Fujimori K."/>
            <person name="Tanai H."/>
            <person name="Kimata M."/>
            <person name="Watanabe M."/>
            <person name="Hiraoka S."/>
            <person name="Chiba Y."/>
            <person name="Ishida S."/>
            <person name="Ono Y."/>
            <person name="Takiguchi S."/>
            <person name="Watanabe S."/>
            <person name="Yosida M."/>
            <person name="Hotuta T."/>
            <person name="Kusano J."/>
            <person name="Kanehori K."/>
            <person name="Takahashi-Fujii A."/>
            <person name="Hara H."/>
            <person name="Tanase T.-O."/>
            <person name="Nomura Y."/>
            <person name="Togiya S."/>
            <person name="Komai F."/>
            <person name="Hara R."/>
            <person name="Takeuchi K."/>
            <person name="Arita M."/>
            <person name="Imose N."/>
            <person name="Musashino K."/>
            <person name="Yuuki H."/>
            <person name="Oshima A."/>
            <person name="Sasaki N."/>
            <person name="Aotsuka S."/>
            <person name="Yoshikawa Y."/>
            <person name="Matsunawa H."/>
            <person name="Ichihara T."/>
            <person name="Shiohata N."/>
            <person name="Sano S."/>
            <person name="Moriya S."/>
            <person name="Momiyama H."/>
            <person name="Satoh N."/>
            <person name="Takami S."/>
            <person name="Terashima Y."/>
            <person name="Suzuki O."/>
            <person name="Nakagawa S."/>
            <person name="Senoh A."/>
            <person name="Mizoguchi H."/>
            <person name="Goto Y."/>
            <person name="Shimizu F."/>
            <person name="Wakebe H."/>
            <person name="Hishigaki H."/>
            <person name="Watanabe T."/>
            <person name="Sugiyama A."/>
            <person name="Takemoto M."/>
            <person name="Kawakami B."/>
            <person name="Yamazaki M."/>
            <person name="Watanabe K."/>
            <person name="Kumagai A."/>
            <person name="Itakura S."/>
            <person name="Fukuzumi Y."/>
            <person name="Fujimori Y."/>
            <person name="Komiyama M."/>
            <person name="Tashiro H."/>
            <person name="Tanigami A."/>
            <person name="Fujiwara T."/>
            <person name="Ono T."/>
            <person name="Yamada K."/>
            <person name="Fujii Y."/>
            <person name="Ozaki K."/>
            <person name="Hirao M."/>
            <person name="Ohmori Y."/>
            <person name="Kawabata A."/>
            <person name="Hikiji T."/>
            <person name="Kobatake N."/>
            <person name="Inagaki H."/>
            <person name="Ikema Y."/>
            <person name="Okamoto S."/>
            <person name="Okitani R."/>
            <person name="Kawakami T."/>
            <person name="Noguchi S."/>
            <person name="Itoh T."/>
            <person name="Shigeta K."/>
            <person name="Senba T."/>
            <person name="Matsumura K."/>
            <person name="Nakajima Y."/>
            <person name="Mizuno T."/>
            <person name="Morinaga M."/>
            <person name="Sasaki M."/>
            <person name="Togashi T."/>
            <person name="Oyama M."/>
            <person name="Hata H."/>
            <person name="Watanabe M."/>
            <person name="Komatsu T."/>
            <person name="Mizushima-Sugano J."/>
            <person name="Satoh T."/>
            <person name="Shirai Y."/>
            <person name="Takahashi Y."/>
            <person name="Nakagawa K."/>
            <person name="Okumura K."/>
            <person name="Nagase T."/>
            <person name="Nomura N."/>
            <person name="Kikuchi H."/>
            <person name="Masuho Y."/>
            <person name="Yamashita R."/>
            <person name="Nakai K."/>
            <person name="Yada T."/>
            <person name="Nakamura Y."/>
            <person name="Ohara O."/>
            <person name="Isogai T."/>
            <person name="Sugano S."/>
        </authorList>
    </citation>
    <scope>NUCLEOTIDE SEQUENCE [LARGE SCALE MRNA]</scope>
    <source>
        <tissue>Testis</tissue>
    </source>
</reference>
<reference key="2">
    <citation type="journal article" date="2006" name="Nature">
        <title>DNA sequence of human chromosome 17 and analysis of rearrangement in the human lineage.</title>
        <authorList>
            <person name="Zody M.C."/>
            <person name="Garber M."/>
            <person name="Adams D.J."/>
            <person name="Sharpe T."/>
            <person name="Harrow J."/>
            <person name="Lupski J.R."/>
            <person name="Nicholson C."/>
            <person name="Searle S.M."/>
            <person name="Wilming L."/>
            <person name="Young S.K."/>
            <person name="Abouelleil A."/>
            <person name="Allen N.R."/>
            <person name="Bi W."/>
            <person name="Bloom T."/>
            <person name="Borowsky M.L."/>
            <person name="Bugalter B.E."/>
            <person name="Butler J."/>
            <person name="Chang J.L."/>
            <person name="Chen C.-K."/>
            <person name="Cook A."/>
            <person name="Corum B."/>
            <person name="Cuomo C.A."/>
            <person name="de Jong P.J."/>
            <person name="DeCaprio D."/>
            <person name="Dewar K."/>
            <person name="FitzGerald M."/>
            <person name="Gilbert J."/>
            <person name="Gibson R."/>
            <person name="Gnerre S."/>
            <person name="Goldstein S."/>
            <person name="Grafham D.V."/>
            <person name="Grocock R."/>
            <person name="Hafez N."/>
            <person name="Hagopian D.S."/>
            <person name="Hart E."/>
            <person name="Norman C.H."/>
            <person name="Humphray S."/>
            <person name="Jaffe D.B."/>
            <person name="Jones M."/>
            <person name="Kamal M."/>
            <person name="Khodiyar V.K."/>
            <person name="LaButti K."/>
            <person name="Laird G."/>
            <person name="Lehoczky J."/>
            <person name="Liu X."/>
            <person name="Lokyitsang T."/>
            <person name="Loveland J."/>
            <person name="Lui A."/>
            <person name="Macdonald P."/>
            <person name="Major J.E."/>
            <person name="Matthews L."/>
            <person name="Mauceli E."/>
            <person name="McCarroll S.A."/>
            <person name="Mihalev A.H."/>
            <person name="Mudge J."/>
            <person name="Nguyen C."/>
            <person name="Nicol R."/>
            <person name="O'Leary S.B."/>
            <person name="Osoegawa K."/>
            <person name="Schwartz D.C."/>
            <person name="Shaw-Smith C."/>
            <person name="Stankiewicz P."/>
            <person name="Steward C."/>
            <person name="Swarbreck D."/>
            <person name="Venkataraman V."/>
            <person name="Whittaker C.A."/>
            <person name="Yang X."/>
            <person name="Zimmer A.R."/>
            <person name="Bradley A."/>
            <person name="Hubbard T."/>
            <person name="Birren B.W."/>
            <person name="Rogers J."/>
            <person name="Lander E.S."/>
            <person name="Nusbaum C."/>
        </authorList>
    </citation>
    <scope>NUCLEOTIDE SEQUENCE [LARGE SCALE GENOMIC DNA]</scope>
</reference>
<reference key="3">
    <citation type="journal article" date="2004" name="Genome Res.">
        <title>The status, quality, and expansion of the NIH full-length cDNA project: the Mammalian Gene Collection (MGC).</title>
        <authorList>
            <consortium name="The MGC Project Team"/>
        </authorList>
    </citation>
    <scope>NUCLEOTIDE SEQUENCE [LARGE SCALE MRNA]</scope>
    <source>
        <tissue>Cerebellum</tissue>
    </source>
</reference>
<keyword id="KW-0025">Alternative splicing</keyword>
<keyword id="KW-0106">Calcium</keyword>
<keyword id="KW-0479">Metal-binding</keyword>
<keyword id="KW-0597">Phosphoprotein</keyword>
<keyword id="KW-1267">Proteomics identification</keyword>
<keyword id="KW-1185">Reference proteome</keyword>
<keyword id="KW-0677">Repeat</keyword>
<comment type="interaction">
    <interactant intactId="EBI-11958551">
        <id>Q8N7B9-2</id>
    </interactant>
    <interactant intactId="EBI-11524851">
        <id>Q8NA61-2</id>
        <label>CBY2</label>
    </interactant>
    <organismsDiffer>false</organismsDiffer>
    <experiments>3</experiments>
</comment>
<comment type="interaction">
    <interactant intactId="EBI-11958551">
        <id>Q8N7B9-2</id>
    </interactant>
    <interactant intactId="EBI-473189">
        <id>Q96D09</id>
        <label>GPRASP2</label>
    </interactant>
    <organismsDiffer>false</organismsDiffer>
    <experiments>3</experiments>
</comment>
<comment type="interaction">
    <interactant intactId="EBI-11958551">
        <id>Q8N7B9-2</id>
    </interactant>
    <interactant intactId="EBI-748210">
        <id>P00492</id>
        <label>HPRT1</label>
    </interactant>
    <organismsDiffer>false</organismsDiffer>
    <experiments>3</experiments>
</comment>
<comment type="interaction">
    <interactant intactId="EBI-11958551">
        <id>Q8N7B9-2</id>
    </interactant>
    <interactant intactId="EBI-1047093">
        <id>O76011</id>
        <label>KRT34</label>
    </interactant>
    <organismsDiffer>false</organismsDiffer>
    <experiments>3</experiments>
</comment>
<comment type="interaction">
    <interactant intactId="EBI-11958551">
        <id>Q8N7B9-2</id>
    </interactant>
    <interactant intactId="EBI-1058674">
        <id>Q92764</id>
        <label>KRT35</label>
    </interactant>
    <organismsDiffer>false</organismsDiffer>
    <experiments>3</experiments>
</comment>
<comment type="interaction">
    <interactant intactId="EBI-11958551">
        <id>Q8N7B9-2</id>
    </interactant>
    <interactant intactId="EBI-12813389">
        <id>Q8TDS5</id>
        <label>OXER1</label>
    </interactant>
    <organismsDiffer>false</organismsDiffer>
    <experiments>3</experiments>
</comment>
<comment type="interaction">
    <interactant intactId="EBI-11958551">
        <id>Q8N7B9-2</id>
    </interactant>
    <interactant intactId="EBI-351113">
        <id>Q69YQ0</id>
        <label>SPECC1L</label>
    </interactant>
    <organismsDiffer>false</organismsDiffer>
    <experiments>3</experiments>
</comment>
<comment type="interaction">
    <interactant intactId="EBI-11958551">
        <id>Q8N7B9-2</id>
    </interactant>
    <interactant intactId="EBI-9090990">
        <id>Q5W5X9-3</id>
        <label>TTC23</label>
    </interactant>
    <organismsDiffer>false</organismsDiffer>
    <experiments>3</experiments>
</comment>
<comment type="interaction">
    <interactant intactId="EBI-11958551">
        <id>Q8N7B9-2</id>
    </interactant>
    <interactant intactId="EBI-743923">
        <id>O00308</id>
        <label>WWP2</label>
    </interactant>
    <organismsDiffer>false</organismsDiffer>
    <experiments>3</experiments>
</comment>
<comment type="alternative products">
    <event type="alternative splicing"/>
    <isoform>
        <id>Q8N7B9-1</id>
        <name>1</name>
        <sequence type="displayed"/>
    </isoform>
    <isoform>
        <id>Q8N7B9-2</id>
        <name>2</name>
        <sequence type="described" ref="VSP_047183"/>
    </isoform>
</comment>
<sequence>MAVSEIKPKLKLNPLTKVPISHNKRDRDLPGSLQCQLQHKEKKLSASQMAAFQDAYNFFYKDKTGCIDFHGLMCTVAKLGMNLTKHDVYNELKCADIDRDGKVNFSDFIKVLTDKNLFLKAVVPEKETCLDLAGNPGILLFEILSRLLETSALPRKSIIEIVSYFQRKFQHTGPGMLWSPYTMGYGKRTLKPDICTPPSSSMAAFANAARIAIMKEKDLFKFLEELKRCNSGSDSPYSKIPIFPLFPNVDGVVMGKPFKDMQKLEMLRIKEPLHFFEDYFFHKRDWKTQAANIKSMDPASGYSNNIFTIDQMLKKKQTCTVADATAIKQHVKRATDTYNLGIALEHRKEMLNLWQKIRGDLIGMDSRNESFYDTFSTYTWSWNVCQELLSPKDLRLYDAYVNRNSSHNSRSSSSSDTSECYTDSGRKRKRKGLKGFQQ</sequence>
<gene>
    <name type="primary">EFCAB3</name>
</gene>
<dbReference type="EMBL" id="AK098684">
    <property type="protein sequence ID" value="BAC05376.1"/>
    <property type="molecule type" value="mRNA"/>
</dbReference>
<dbReference type="EMBL" id="AC008026">
    <property type="status" value="NOT_ANNOTATED_CDS"/>
    <property type="molecule type" value="Genomic_DNA"/>
</dbReference>
<dbReference type="EMBL" id="BC101752">
    <property type="protein sequence ID" value="AAI01753.1"/>
    <property type="molecule type" value="mRNA"/>
</dbReference>
<dbReference type="EMBL" id="BC101778">
    <property type="protein sequence ID" value="AAI01779.1"/>
    <property type="molecule type" value="mRNA"/>
</dbReference>
<dbReference type="CCDS" id="CCDS11632.1">
    <molecule id="Q8N7B9-1"/>
</dbReference>
<dbReference type="CCDS" id="CCDS45751.1">
    <molecule id="Q8N7B9-2"/>
</dbReference>
<dbReference type="RefSeq" id="NP_001138405.1">
    <molecule id="Q8N7B9-2"/>
    <property type="nucleotide sequence ID" value="NM_001144933.2"/>
</dbReference>
<dbReference type="RefSeq" id="NP_775774.1">
    <molecule id="Q8N7B9-1"/>
    <property type="nucleotide sequence ID" value="NM_173503.4"/>
</dbReference>
<dbReference type="RefSeq" id="XP_011522682.1">
    <molecule id="Q8N7B9-1"/>
    <property type="nucleotide sequence ID" value="XM_011524380.2"/>
</dbReference>
<dbReference type="RefSeq" id="XP_011522683.1">
    <property type="nucleotide sequence ID" value="XM_011524381.1"/>
</dbReference>
<dbReference type="RefSeq" id="XP_054171135.1">
    <molecule id="Q8N7B9-1"/>
    <property type="nucleotide sequence ID" value="XM_054315160.1"/>
</dbReference>
<dbReference type="SMR" id="Q8N7B9"/>
<dbReference type="BioGRID" id="127010">
    <property type="interactions" value="18"/>
</dbReference>
<dbReference type="FunCoup" id="Q8N7B9">
    <property type="interactions" value="1"/>
</dbReference>
<dbReference type="IntAct" id="Q8N7B9">
    <property type="interactions" value="9"/>
</dbReference>
<dbReference type="STRING" id="9606.ENSP00000403932"/>
<dbReference type="TCDB" id="8.A.82.4.1">
    <property type="family name" value="the calmodulin calcium binding protein (calmodulin) family"/>
</dbReference>
<dbReference type="iPTMnet" id="Q8N7B9"/>
<dbReference type="PhosphoSitePlus" id="Q8N7B9"/>
<dbReference type="BioMuta" id="EFCAB3"/>
<dbReference type="DMDM" id="74759977"/>
<dbReference type="MassIVE" id="Q8N7B9"/>
<dbReference type="PaxDb" id="9606-ENSP00000403932"/>
<dbReference type="PeptideAtlas" id="Q8N7B9"/>
<dbReference type="ProteomicsDB" id="72284">
    <molecule id="Q8N7B9-1"/>
</dbReference>
<dbReference type="Antibodypedia" id="18612">
    <property type="antibodies" value="34 antibodies from 19 providers"/>
</dbReference>
<dbReference type="DNASU" id="146779"/>
<dbReference type="Ensembl" id="ENST00000305286.8">
    <molecule id="Q8N7B9-1"/>
    <property type="protein sequence ID" value="ENSP00000302649.3"/>
    <property type="gene ID" value="ENSG00000172421.10"/>
</dbReference>
<dbReference type="Ensembl" id="ENST00000450662.7">
    <molecule id="Q8N7B9-2"/>
    <property type="protein sequence ID" value="ENSP00000403932.2"/>
    <property type="gene ID" value="ENSG00000172421.10"/>
</dbReference>
<dbReference type="GeneID" id="146779"/>
<dbReference type="KEGG" id="hsa:146779"/>
<dbReference type="MANE-Select" id="ENST00000305286.8">
    <property type="protein sequence ID" value="ENSP00000302649.3"/>
    <property type="RefSeq nucleotide sequence ID" value="NM_173503.4"/>
    <property type="RefSeq protein sequence ID" value="NP_775774.1"/>
</dbReference>
<dbReference type="UCSC" id="uc002izu.3">
    <molecule id="Q8N7B9-1"/>
    <property type="organism name" value="human"/>
</dbReference>
<dbReference type="AGR" id="HGNC:26379"/>
<dbReference type="CTD" id="146779"/>
<dbReference type="GeneCards" id="EFCAB3"/>
<dbReference type="HGNC" id="HGNC:26379">
    <property type="gene designation" value="EFCAB3"/>
</dbReference>
<dbReference type="HPA" id="ENSG00000172421">
    <property type="expression patterns" value="Tissue enriched (testis)"/>
</dbReference>
<dbReference type="MIM" id="619567">
    <property type="type" value="gene"/>
</dbReference>
<dbReference type="neXtProt" id="NX_Q8N7B9"/>
<dbReference type="OpenTargets" id="ENSG00000172421"/>
<dbReference type="PharmGKB" id="PA143485451"/>
<dbReference type="VEuPathDB" id="HostDB:ENSG00000172421"/>
<dbReference type="eggNOG" id="KOG0027">
    <property type="taxonomic scope" value="Eukaryota"/>
</dbReference>
<dbReference type="GeneTree" id="ENSGT00940000161358"/>
<dbReference type="HOGENOM" id="CLU_055753_0_0_1"/>
<dbReference type="InParanoid" id="Q8N7B9"/>
<dbReference type="OMA" id="AYMNRNT"/>
<dbReference type="OrthoDB" id="26525at2759"/>
<dbReference type="PAN-GO" id="Q8N7B9">
    <property type="GO annotations" value="0 GO annotations based on evolutionary models"/>
</dbReference>
<dbReference type="PhylomeDB" id="Q8N7B9"/>
<dbReference type="TreeFam" id="TF328393"/>
<dbReference type="PathwayCommons" id="Q8N7B9"/>
<dbReference type="SignaLink" id="Q8N7B9"/>
<dbReference type="BioGRID-ORCS" id="146779">
    <property type="hits" value="14 hits in 1136 CRISPR screens"/>
</dbReference>
<dbReference type="ChiTaRS" id="EFCAB3">
    <property type="organism name" value="human"/>
</dbReference>
<dbReference type="GenomeRNAi" id="146779"/>
<dbReference type="Pharos" id="Q8N7B9">
    <property type="development level" value="Tdark"/>
</dbReference>
<dbReference type="PRO" id="PR:Q8N7B9"/>
<dbReference type="Proteomes" id="UP000005640">
    <property type="component" value="Chromosome 17"/>
</dbReference>
<dbReference type="RNAct" id="Q8N7B9">
    <property type="molecule type" value="protein"/>
</dbReference>
<dbReference type="Bgee" id="ENSG00000172421">
    <property type="expression patterns" value="Expressed in male germ line stem cell (sensu Vertebrata) in testis and 59 other cell types or tissues"/>
</dbReference>
<dbReference type="ExpressionAtlas" id="Q8N7B9">
    <property type="expression patterns" value="baseline and differential"/>
</dbReference>
<dbReference type="GO" id="GO:0005509">
    <property type="term" value="F:calcium ion binding"/>
    <property type="evidence" value="ECO:0007669"/>
    <property type="project" value="InterPro"/>
</dbReference>
<dbReference type="Gene3D" id="1.10.238.10">
    <property type="entry name" value="EF-hand"/>
    <property type="match status" value="1"/>
</dbReference>
<dbReference type="InterPro" id="IPR011992">
    <property type="entry name" value="EF-hand-dom_pair"/>
</dbReference>
<dbReference type="InterPro" id="IPR018247">
    <property type="entry name" value="EF_Hand_1_Ca_BS"/>
</dbReference>
<dbReference type="InterPro" id="IPR002048">
    <property type="entry name" value="EF_hand_dom"/>
</dbReference>
<dbReference type="PANTHER" id="PTHR22656">
    <property type="entry name" value="EF-HAND CALCIUM-BINDING DOMAIN-CONTAINING PROTEIN 13"/>
    <property type="match status" value="1"/>
</dbReference>
<dbReference type="PANTHER" id="PTHR22656:SF1">
    <property type="entry name" value="EF-HAND CALCIUM-BINDING DOMAIN-CONTAINING PROTEIN 13"/>
    <property type="match status" value="1"/>
</dbReference>
<dbReference type="Pfam" id="PF13833">
    <property type="entry name" value="EF-hand_8"/>
    <property type="match status" value="1"/>
</dbReference>
<dbReference type="SUPFAM" id="SSF47473">
    <property type="entry name" value="EF-hand"/>
    <property type="match status" value="1"/>
</dbReference>
<dbReference type="PROSITE" id="PS00018">
    <property type="entry name" value="EF_HAND_1"/>
    <property type="match status" value="1"/>
</dbReference>
<dbReference type="PROSITE" id="PS50222">
    <property type="entry name" value="EF_HAND_2"/>
    <property type="match status" value="2"/>
</dbReference>